<keyword id="KW-0071">Autoinducer synthesis</keyword>
<keyword id="KW-0408">Iron</keyword>
<keyword id="KW-0456">Lyase</keyword>
<keyword id="KW-0479">Metal-binding</keyword>
<keyword id="KW-0673">Quorum sensing</keyword>
<gene>
    <name evidence="1" type="primary">luxS</name>
    <name type="ordered locus">Sbal223_3368</name>
</gene>
<name>LUXS_SHEB2</name>
<sequence length="169" mass="18831">MPLLDSFTVDHTRMNAPAVRVAKHMSTPKGDAITVFDLRFCAPNKDILSERGIHTLEHLFAGFMRDHLNGSNVEIIDISPMGCRTGFYMSLIGEPTERQVADAWLAAMEDVLKVVEQSEIPELNEYQCGTYEMHSLEQAQDIARNIIAAGVSVNRNDDLKLSDEILGNL</sequence>
<comment type="function">
    <text evidence="1">Involved in the synthesis of autoinducer 2 (AI-2) which is secreted by bacteria and is used to communicate both the cell density and the metabolic potential of the environment. The regulation of gene expression in response to changes in cell density is called quorum sensing. Catalyzes the transformation of S-ribosylhomocysteine (RHC) to homocysteine (HC) and 4,5-dihydroxy-2,3-pentadione (DPD).</text>
</comment>
<comment type="catalytic activity">
    <reaction evidence="1">
        <text>S-(5-deoxy-D-ribos-5-yl)-L-homocysteine = (S)-4,5-dihydroxypentane-2,3-dione + L-homocysteine</text>
        <dbReference type="Rhea" id="RHEA:17753"/>
        <dbReference type="ChEBI" id="CHEBI:29484"/>
        <dbReference type="ChEBI" id="CHEBI:58195"/>
        <dbReference type="ChEBI" id="CHEBI:58199"/>
        <dbReference type="EC" id="4.4.1.21"/>
    </reaction>
</comment>
<comment type="cofactor">
    <cofactor evidence="1">
        <name>Fe cation</name>
        <dbReference type="ChEBI" id="CHEBI:24875"/>
    </cofactor>
    <text evidence="1">Binds 1 Fe cation per subunit.</text>
</comment>
<comment type="subunit">
    <text evidence="1">Homodimer.</text>
</comment>
<comment type="similarity">
    <text evidence="1">Belongs to the LuxS family.</text>
</comment>
<reference key="1">
    <citation type="submission" date="2008-12" db="EMBL/GenBank/DDBJ databases">
        <title>Complete sequence of chromosome of Shewanella baltica OS223.</title>
        <authorList>
            <consortium name="US DOE Joint Genome Institute"/>
            <person name="Lucas S."/>
            <person name="Copeland A."/>
            <person name="Lapidus A."/>
            <person name="Glavina del Rio T."/>
            <person name="Dalin E."/>
            <person name="Tice H."/>
            <person name="Bruce D."/>
            <person name="Goodwin L."/>
            <person name="Pitluck S."/>
            <person name="Chertkov O."/>
            <person name="Meincke L."/>
            <person name="Brettin T."/>
            <person name="Detter J.C."/>
            <person name="Han C."/>
            <person name="Kuske C.R."/>
            <person name="Larimer F."/>
            <person name="Land M."/>
            <person name="Hauser L."/>
            <person name="Kyrpides N."/>
            <person name="Ovchinnikova G."/>
            <person name="Brettar I."/>
            <person name="Rodrigues J."/>
            <person name="Konstantinidis K."/>
            <person name="Tiedje J."/>
        </authorList>
    </citation>
    <scope>NUCLEOTIDE SEQUENCE [LARGE SCALE GENOMIC DNA]</scope>
    <source>
        <strain>OS223</strain>
    </source>
</reference>
<organism>
    <name type="scientific">Shewanella baltica (strain OS223)</name>
    <dbReference type="NCBI Taxonomy" id="407976"/>
    <lineage>
        <taxon>Bacteria</taxon>
        <taxon>Pseudomonadati</taxon>
        <taxon>Pseudomonadota</taxon>
        <taxon>Gammaproteobacteria</taxon>
        <taxon>Alteromonadales</taxon>
        <taxon>Shewanellaceae</taxon>
        <taxon>Shewanella</taxon>
    </lineage>
</organism>
<proteinExistence type="inferred from homology"/>
<feature type="chain" id="PRO_1000191037" description="S-ribosylhomocysteine lyase">
    <location>
        <begin position="1"/>
        <end position="169"/>
    </location>
</feature>
<feature type="binding site" evidence="1">
    <location>
        <position position="54"/>
    </location>
    <ligand>
        <name>Fe cation</name>
        <dbReference type="ChEBI" id="CHEBI:24875"/>
    </ligand>
</feature>
<feature type="binding site" evidence="1">
    <location>
        <position position="58"/>
    </location>
    <ligand>
        <name>Fe cation</name>
        <dbReference type="ChEBI" id="CHEBI:24875"/>
    </ligand>
</feature>
<feature type="binding site" evidence="1">
    <location>
        <position position="128"/>
    </location>
    <ligand>
        <name>Fe cation</name>
        <dbReference type="ChEBI" id="CHEBI:24875"/>
    </ligand>
</feature>
<evidence type="ECO:0000255" key="1">
    <source>
        <dbReference type="HAMAP-Rule" id="MF_00091"/>
    </source>
</evidence>
<protein>
    <recommendedName>
        <fullName evidence="1">S-ribosylhomocysteine lyase</fullName>
        <ecNumber evidence="1">4.4.1.21</ecNumber>
    </recommendedName>
    <alternativeName>
        <fullName evidence="1">AI-2 synthesis protein</fullName>
    </alternativeName>
    <alternativeName>
        <fullName evidence="1">Autoinducer-2 production protein LuxS</fullName>
    </alternativeName>
</protein>
<accession>B8EC51</accession>
<dbReference type="EC" id="4.4.1.21" evidence="1"/>
<dbReference type="EMBL" id="CP001252">
    <property type="protein sequence ID" value="ACK47852.1"/>
    <property type="molecule type" value="Genomic_DNA"/>
</dbReference>
<dbReference type="RefSeq" id="WP_006080460.1">
    <property type="nucleotide sequence ID" value="NC_011663.1"/>
</dbReference>
<dbReference type="SMR" id="B8EC51"/>
<dbReference type="GeneID" id="11773601"/>
<dbReference type="KEGG" id="sbp:Sbal223_3368"/>
<dbReference type="HOGENOM" id="CLU_107531_2_0_6"/>
<dbReference type="Proteomes" id="UP000002507">
    <property type="component" value="Chromosome"/>
</dbReference>
<dbReference type="GO" id="GO:0005506">
    <property type="term" value="F:iron ion binding"/>
    <property type="evidence" value="ECO:0007669"/>
    <property type="project" value="InterPro"/>
</dbReference>
<dbReference type="GO" id="GO:0043768">
    <property type="term" value="F:S-ribosylhomocysteine lyase activity"/>
    <property type="evidence" value="ECO:0007669"/>
    <property type="project" value="UniProtKB-UniRule"/>
</dbReference>
<dbReference type="GO" id="GO:0009372">
    <property type="term" value="P:quorum sensing"/>
    <property type="evidence" value="ECO:0007669"/>
    <property type="project" value="UniProtKB-UniRule"/>
</dbReference>
<dbReference type="FunFam" id="3.30.1360.80:FF:000001">
    <property type="entry name" value="S-ribosylhomocysteine lyase"/>
    <property type="match status" value="1"/>
</dbReference>
<dbReference type="Gene3D" id="3.30.1360.80">
    <property type="entry name" value="S-ribosylhomocysteinase (LuxS)"/>
    <property type="match status" value="1"/>
</dbReference>
<dbReference type="HAMAP" id="MF_00091">
    <property type="entry name" value="LuxS"/>
    <property type="match status" value="1"/>
</dbReference>
<dbReference type="InterPro" id="IPR037005">
    <property type="entry name" value="LuxS_sf"/>
</dbReference>
<dbReference type="InterPro" id="IPR011249">
    <property type="entry name" value="Metalloenz_LuxS/M16"/>
</dbReference>
<dbReference type="InterPro" id="IPR003815">
    <property type="entry name" value="S-ribosylhomocysteinase"/>
</dbReference>
<dbReference type="NCBIfam" id="NF002602">
    <property type="entry name" value="PRK02260.1-2"/>
    <property type="match status" value="1"/>
</dbReference>
<dbReference type="PANTHER" id="PTHR35799">
    <property type="entry name" value="S-RIBOSYLHOMOCYSTEINE LYASE"/>
    <property type="match status" value="1"/>
</dbReference>
<dbReference type="PANTHER" id="PTHR35799:SF1">
    <property type="entry name" value="S-RIBOSYLHOMOCYSTEINE LYASE"/>
    <property type="match status" value="1"/>
</dbReference>
<dbReference type="Pfam" id="PF02664">
    <property type="entry name" value="LuxS"/>
    <property type="match status" value="1"/>
</dbReference>
<dbReference type="PIRSF" id="PIRSF006160">
    <property type="entry name" value="AI2"/>
    <property type="match status" value="1"/>
</dbReference>
<dbReference type="PRINTS" id="PR01487">
    <property type="entry name" value="LUXSPROTEIN"/>
</dbReference>
<dbReference type="SUPFAM" id="SSF63411">
    <property type="entry name" value="LuxS/MPP-like metallohydrolase"/>
    <property type="match status" value="1"/>
</dbReference>